<evidence type="ECO:0000255" key="1">
    <source>
        <dbReference type="HAMAP-Rule" id="MF_01328"/>
    </source>
</evidence>
<evidence type="ECO:0000256" key="2">
    <source>
        <dbReference type="SAM" id="MobiDB-lite"/>
    </source>
</evidence>
<evidence type="ECO:0000305" key="3"/>
<organism>
    <name type="scientific">Actinobacillus pleuropneumoniae serotype 5b (strain L20)</name>
    <dbReference type="NCBI Taxonomy" id="416269"/>
    <lineage>
        <taxon>Bacteria</taxon>
        <taxon>Pseudomonadati</taxon>
        <taxon>Pseudomonadota</taxon>
        <taxon>Gammaproteobacteria</taxon>
        <taxon>Pasteurellales</taxon>
        <taxon>Pasteurellaceae</taxon>
        <taxon>Actinobacillus</taxon>
    </lineage>
</organism>
<sequence>MELQVVGANALTVSETTFGREFNEALIHQVVVAYAAGARQGSRAQKTRAEVSGSGKKPWRQKGTGRARSGDIKSPIWRSGGITFAAKPQDHSQKVNKKMYRGAIKSILSELVRQERLVVVEKFEIEAPKTKVLVQKLKDLALNDALIITANLDENLFLAARNLYKVDVRDVQGIDPVSLIAFDKVVITADAVKQIEEMLA</sequence>
<protein>
    <recommendedName>
        <fullName evidence="1">Large ribosomal subunit protein uL4</fullName>
    </recommendedName>
    <alternativeName>
        <fullName evidence="3">50S ribosomal protein L4</fullName>
    </alternativeName>
</protein>
<name>RL4_ACTP2</name>
<gene>
    <name evidence="1" type="primary">rplD</name>
    <name type="ordered locus">APL_1761</name>
</gene>
<accession>A3N359</accession>
<reference key="1">
    <citation type="journal article" date="2008" name="J. Bacteriol.">
        <title>The complete genome sequence of Actinobacillus pleuropneumoniae L20 (serotype 5b).</title>
        <authorList>
            <person name="Foote S.J."/>
            <person name="Bosse J.T."/>
            <person name="Bouevitch A.B."/>
            <person name="Langford P.R."/>
            <person name="Young N.M."/>
            <person name="Nash J.H.E."/>
        </authorList>
    </citation>
    <scope>NUCLEOTIDE SEQUENCE [LARGE SCALE GENOMIC DNA]</scope>
    <source>
        <strain>L20</strain>
    </source>
</reference>
<dbReference type="EMBL" id="CP000569">
    <property type="protein sequence ID" value="ABN74845.1"/>
    <property type="molecule type" value="Genomic_DNA"/>
</dbReference>
<dbReference type="RefSeq" id="WP_005599282.1">
    <property type="nucleotide sequence ID" value="NC_009053.1"/>
</dbReference>
<dbReference type="SMR" id="A3N359"/>
<dbReference type="STRING" id="416269.APL_1761"/>
<dbReference type="EnsemblBacteria" id="ABN74845">
    <property type="protein sequence ID" value="ABN74845"/>
    <property type="gene ID" value="APL_1761"/>
</dbReference>
<dbReference type="GeneID" id="92743654"/>
<dbReference type="KEGG" id="apl:APL_1761"/>
<dbReference type="eggNOG" id="COG0088">
    <property type="taxonomic scope" value="Bacteria"/>
</dbReference>
<dbReference type="HOGENOM" id="CLU_041575_5_2_6"/>
<dbReference type="Proteomes" id="UP000001432">
    <property type="component" value="Chromosome"/>
</dbReference>
<dbReference type="GO" id="GO:1990904">
    <property type="term" value="C:ribonucleoprotein complex"/>
    <property type="evidence" value="ECO:0007669"/>
    <property type="project" value="UniProtKB-KW"/>
</dbReference>
<dbReference type="GO" id="GO:0005840">
    <property type="term" value="C:ribosome"/>
    <property type="evidence" value="ECO:0007669"/>
    <property type="project" value="UniProtKB-KW"/>
</dbReference>
<dbReference type="GO" id="GO:0019843">
    <property type="term" value="F:rRNA binding"/>
    <property type="evidence" value="ECO:0007669"/>
    <property type="project" value="UniProtKB-UniRule"/>
</dbReference>
<dbReference type="GO" id="GO:0003735">
    <property type="term" value="F:structural constituent of ribosome"/>
    <property type="evidence" value="ECO:0007669"/>
    <property type="project" value="InterPro"/>
</dbReference>
<dbReference type="GO" id="GO:0006412">
    <property type="term" value="P:translation"/>
    <property type="evidence" value="ECO:0007669"/>
    <property type="project" value="UniProtKB-UniRule"/>
</dbReference>
<dbReference type="FunFam" id="3.40.1370.10:FF:000001">
    <property type="entry name" value="50S ribosomal protein L4"/>
    <property type="match status" value="1"/>
</dbReference>
<dbReference type="Gene3D" id="3.40.1370.10">
    <property type="match status" value="1"/>
</dbReference>
<dbReference type="HAMAP" id="MF_01328_B">
    <property type="entry name" value="Ribosomal_uL4_B"/>
    <property type="match status" value="1"/>
</dbReference>
<dbReference type="InterPro" id="IPR002136">
    <property type="entry name" value="Ribosomal_uL4"/>
</dbReference>
<dbReference type="InterPro" id="IPR013005">
    <property type="entry name" value="Ribosomal_uL4-like"/>
</dbReference>
<dbReference type="InterPro" id="IPR023574">
    <property type="entry name" value="Ribosomal_uL4_dom_sf"/>
</dbReference>
<dbReference type="NCBIfam" id="TIGR03953">
    <property type="entry name" value="rplD_bact"/>
    <property type="match status" value="1"/>
</dbReference>
<dbReference type="PANTHER" id="PTHR10746">
    <property type="entry name" value="50S RIBOSOMAL PROTEIN L4"/>
    <property type="match status" value="1"/>
</dbReference>
<dbReference type="PANTHER" id="PTHR10746:SF6">
    <property type="entry name" value="LARGE RIBOSOMAL SUBUNIT PROTEIN UL4M"/>
    <property type="match status" value="1"/>
</dbReference>
<dbReference type="Pfam" id="PF00573">
    <property type="entry name" value="Ribosomal_L4"/>
    <property type="match status" value="1"/>
</dbReference>
<dbReference type="SUPFAM" id="SSF52166">
    <property type="entry name" value="Ribosomal protein L4"/>
    <property type="match status" value="1"/>
</dbReference>
<comment type="function">
    <text evidence="1">One of the primary rRNA binding proteins, this protein initially binds near the 5'-end of the 23S rRNA. It is important during the early stages of 50S assembly. It makes multiple contacts with different domains of the 23S rRNA in the assembled 50S subunit and ribosome.</text>
</comment>
<comment type="function">
    <text evidence="1">Forms part of the polypeptide exit tunnel.</text>
</comment>
<comment type="subunit">
    <text evidence="1">Part of the 50S ribosomal subunit.</text>
</comment>
<comment type="similarity">
    <text evidence="1">Belongs to the universal ribosomal protein uL4 family.</text>
</comment>
<keyword id="KW-1185">Reference proteome</keyword>
<keyword id="KW-0687">Ribonucleoprotein</keyword>
<keyword id="KW-0689">Ribosomal protein</keyword>
<keyword id="KW-0694">RNA-binding</keyword>
<keyword id="KW-0699">rRNA-binding</keyword>
<feature type="chain" id="PRO_1000052348" description="Large ribosomal subunit protein uL4">
    <location>
        <begin position="1"/>
        <end position="200"/>
    </location>
</feature>
<feature type="region of interest" description="Disordered" evidence="2">
    <location>
        <begin position="43"/>
        <end position="71"/>
    </location>
</feature>
<proteinExistence type="inferred from homology"/>